<name>SYT13_HUMAN</name>
<keyword id="KW-0002">3D-structure</keyword>
<keyword id="KW-0472">Membrane</keyword>
<keyword id="KW-1267">Proteomics identification</keyword>
<keyword id="KW-1185">Reference proteome</keyword>
<keyword id="KW-0677">Repeat</keyword>
<keyword id="KW-0812">Transmembrane</keyword>
<keyword id="KW-1133">Transmembrane helix</keyword>
<gene>
    <name type="primary">SYT13</name>
    <name type="synonym">KIAA1427</name>
</gene>
<dbReference type="EMBL" id="AB037848">
    <property type="protein sequence ID" value="BAA92665.1"/>
    <property type="status" value="ALT_INIT"/>
    <property type="molecule type" value="mRNA"/>
</dbReference>
<dbReference type="EMBL" id="AK291009">
    <property type="protein sequence ID" value="BAF83698.1"/>
    <property type="molecule type" value="mRNA"/>
</dbReference>
<dbReference type="EMBL" id="AL512743">
    <property type="protein sequence ID" value="CAC21669.1"/>
    <property type="molecule type" value="mRNA"/>
</dbReference>
<dbReference type="EMBL" id="CH471064">
    <property type="protein sequence ID" value="EAW68043.1"/>
    <property type="molecule type" value="Genomic_DNA"/>
</dbReference>
<dbReference type="EMBL" id="CH471064">
    <property type="protein sequence ID" value="EAW68044.1"/>
    <property type="molecule type" value="Genomic_DNA"/>
</dbReference>
<dbReference type="EMBL" id="BC093830">
    <property type="protein sequence ID" value="AAH93830.1"/>
    <property type="molecule type" value="mRNA"/>
</dbReference>
<dbReference type="EMBL" id="BC093832">
    <property type="protein sequence ID" value="AAH93832.1"/>
    <property type="molecule type" value="mRNA"/>
</dbReference>
<dbReference type="EMBL" id="AJ303362">
    <property type="protein sequence ID" value="CAC33884.1"/>
    <property type="molecule type" value="mRNA"/>
</dbReference>
<dbReference type="CCDS" id="CCDS31470.1"/>
<dbReference type="RefSeq" id="NP_065877.1">
    <property type="nucleotide sequence ID" value="NM_020826.3"/>
</dbReference>
<dbReference type="PDB" id="1WFM">
    <property type="method" value="NMR"/>
    <property type="chains" value="A=155-279"/>
</dbReference>
<dbReference type="PDBsum" id="1WFM"/>
<dbReference type="SMR" id="Q7L8C5"/>
<dbReference type="BioGRID" id="121638">
    <property type="interactions" value="8"/>
</dbReference>
<dbReference type="FunCoup" id="Q7L8C5">
    <property type="interactions" value="208"/>
</dbReference>
<dbReference type="IntAct" id="Q7L8C5">
    <property type="interactions" value="5"/>
</dbReference>
<dbReference type="STRING" id="9606.ENSP00000020926"/>
<dbReference type="GlyCosmos" id="Q7L8C5">
    <property type="glycosylation" value="1 site, 1 glycan"/>
</dbReference>
<dbReference type="GlyGen" id="Q7L8C5">
    <property type="glycosylation" value="4 sites, 2 N-linked glycans (2 sites), 1 O-linked glycan (1 site)"/>
</dbReference>
<dbReference type="iPTMnet" id="Q7L8C5"/>
<dbReference type="PhosphoSitePlus" id="Q7L8C5"/>
<dbReference type="BioMuta" id="SYT13"/>
<dbReference type="DMDM" id="74749900"/>
<dbReference type="jPOST" id="Q7L8C5"/>
<dbReference type="MassIVE" id="Q7L8C5"/>
<dbReference type="PaxDb" id="9606-ENSP00000020926"/>
<dbReference type="PeptideAtlas" id="Q7L8C5"/>
<dbReference type="ProteomicsDB" id="68836"/>
<dbReference type="Antibodypedia" id="42821">
    <property type="antibodies" value="135 antibodies from 29 providers"/>
</dbReference>
<dbReference type="DNASU" id="57586"/>
<dbReference type="Ensembl" id="ENST00000020926.8">
    <property type="protein sequence ID" value="ENSP00000020926.3"/>
    <property type="gene ID" value="ENSG00000019505.8"/>
</dbReference>
<dbReference type="GeneID" id="57586"/>
<dbReference type="KEGG" id="hsa:57586"/>
<dbReference type="MANE-Select" id="ENST00000020926.8">
    <property type="protein sequence ID" value="ENSP00000020926.3"/>
    <property type="RefSeq nucleotide sequence ID" value="NM_020826.3"/>
    <property type="RefSeq protein sequence ID" value="NP_065877.1"/>
</dbReference>
<dbReference type="UCSC" id="uc001myq.3">
    <property type="organism name" value="human"/>
</dbReference>
<dbReference type="AGR" id="HGNC:14962"/>
<dbReference type="CTD" id="57586"/>
<dbReference type="DisGeNET" id="57586"/>
<dbReference type="GeneCards" id="SYT13"/>
<dbReference type="HGNC" id="HGNC:14962">
    <property type="gene designation" value="SYT13"/>
</dbReference>
<dbReference type="HPA" id="ENSG00000019505">
    <property type="expression patterns" value="Tissue enhanced (brain, gallbladder)"/>
</dbReference>
<dbReference type="MIM" id="607716">
    <property type="type" value="gene"/>
</dbReference>
<dbReference type="neXtProt" id="NX_Q7L8C5"/>
<dbReference type="OpenTargets" id="ENSG00000019505"/>
<dbReference type="PharmGKB" id="PA37942"/>
<dbReference type="VEuPathDB" id="HostDB:ENSG00000019505"/>
<dbReference type="eggNOG" id="KOG1028">
    <property type="taxonomic scope" value="Eukaryota"/>
</dbReference>
<dbReference type="GeneTree" id="ENSGT00940000160226"/>
<dbReference type="HOGENOM" id="CLU_023008_2_0_1"/>
<dbReference type="InParanoid" id="Q7L8C5"/>
<dbReference type="OMA" id="DEEGQSC"/>
<dbReference type="OrthoDB" id="9997431at2759"/>
<dbReference type="PAN-GO" id="Q7L8C5">
    <property type="GO annotations" value="14 GO annotations based on evolutionary models"/>
</dbReference>
<dbReference type="PhylomeDB" id="Q7L8C5"/>
<dbReference type="TreeFam" id="TF315600"/>
<dbReference type="PathwayCommons" id="Q7L8C5"/>
<dbReference type="SignaLink" id="Q7L8C5"/>
<dbReference type="BioGRID-ORCS" id="57586">
    <property type="hits" value="6 hits in 1144 CRISPR screens"/>
</dbReference>
<dbReference type="ChiTaRS" id="SYT13">
    <property type="organism name" value="human"/>
</dbReference>
<dbReference type="EvolutionaryTrace" id="Q7L8C5"/>
<dbReference type="GeneWiki" id="SYT13"/>
<dbReference type="GenomeRNAi" id="57586"/>
<dbReference type="Pharos" id="Q7L8C5">
    <property type="development level" value="Tbio"/>
</dbReference>
<dbReference type="PRO" id="PR:Q7L8C5"/>
<dbReference type="Proteomes" id="UP000005640">
    <property type="component" value="Chromosome 11"/>
</dbReference>
<dbReference type="RNAct" id="Q7L8C5">
    <property type="molecule type" value="protein"/>
</dbReference>
<dbReference type="Bgee" id="ENSG00000019505">
    <property type="expression patterns" value="Expressed in middle temporal gyrus and 119 other cell types or tissues"/>
</dbReference>
<dbReference type="ExpressionAtlas" id="Q7L8C5">
    <property type="expression patterns" value="baseline and differential"/>
</dbReference>
<dbReference type="GO" id="GO:0030424">
    <property type="term" value="C:axon"/>
    <property type="evidence" value="ECO:0000318"/>
    <property type="project" value="GO_Central"/>
</dbReference>
<dbReference type="GO" id="GO:0031045">
    <property type="term" value="C:dense core granule"/>
    <property type="evidence" value="ECO:0000318"/>
    <property type="project" value="GO_Central"/>
</dbReference>
<dbReference type="GO" id="GO:0070382">
    <property type="term" value="C:exocytic vesicle"/>
    <property type="evidence" value="ECO:0000318"/>
    <property type="project" value="GO_Central"/>
</dbReference>
<dbReference type="GO" id="GO:0043231">
    <property type="term" value="C:intracellular membrane-bounded organelle"/>
    <property type="evidence" value="ECO:0000314"/>
    <property type="project" value="HPA"/>
</dbReference>
<dbReference type="GO" id="GO:0005886">
    <property type="term" value="C:plasma membrane"/>
    <property type="evidence" value="ECO:0000318"/>
    <property type="project" value="GO_Central"/>
</dbReference>
<dbReference type="GO" id="GO:0030672">
    <property type="term" value="C:synaptic vesicle membrane"/>
    <property type="evidence" value="ECO:0000318"/>
    <property type="project" value="GO_Central"/>
</dbReference>
<dbReference type="GO" id="GO:0030133">
    <property type="term" value="C:transport vesicle"/>
    <property type="evidence" value="ECO:0000314"/>
    <property type="project" value="LIFEdb"/>
</dbReference>
<dbReference type="GO" id="GO:0061891">
    <property type="term" value="F:calcium ion sensor activity"/>
    <property type="evidence" value="ECO:0000318"/>
    <property type="project" value="GO_Central"/>
</dbReference>
<dbReference type="GO" id="GO:0005544">
    <property type="term" value="F:calcium-dependent phospholipid binding"/>
    <property type="evidence" value="ECO:0000318"/>
    <property type="project" value="GO_Central"/>
</dbReference>
<dbReference type="GO" id="GO:0000149">
    <property type="term" value="F:SNARE binding"/>
    <property type="evidence" value="ECO:0000318"/>
    <property type="project" value="GO_Central"/>
</dbReference>
<dbReference type="GO" id="GO:0099502">
    <property type="term" value="P:calcium-dependent activation of synaptic vesicle fusion"/>
    <property type="evidence" value="ECO:0000318"/>
    <property type="project" value="GO_Central"/>
</dbReference>
<dbReference type="GO" id="GO:0017158">
    <property type="term" value="P:regulation of calcium ion-dependent exocytosis"/>
    <property type="evidence" value="ECO:0000318"/>
    <property type="project" value="GO_Central"/>
</dbReference>
<dbReference type="GO" id="GO:2000300">
    <property type="term" value="P:regulation of synaptic vesicle exocytosis"/>
    <property type="evidence" value="ECO:0000318"/>
    <property type="project" value="GO_Central"/>
</dbReference>
<dbReference type="GO" id="GO:0016192">
    <property type="term" value="P:vesicle-mediated transport"/>
    <property type="evidence" value="ECO:0000318"/>
    <property type="project" value="GO_Central"/>
</dbReference>
<dbReference type="CDD" id="cd08677">
    <property type="entry name" value="C2A_Synaptotagmin-13"/>
    <property type="match status" value="1"/>
</dbReference>
<dbReference type="CDD" id="cd08407">
    <property type="entry name" value="C2B_Synaptotagmin-13"/>
    <property type="match status" value="1"/>
</dbReference>
<dbReference type="FunFam" id="2.60.40.150:FF:000101">
    <property type="entry name" value="Synaptotagmin 13"/>
    <property type="match status" value="1"/>
</dbReference>
<dbReference type="FunFam" id="2.60.40.150:FF:000145">
    <property type="entry name" value="Synaptotagmin 13"/>
    <property type="match status" value="1"/>
</dbReference>
<dbReference type="Gene3D" id="2.60.40.150">
    <property type="entry name" value="C2 domain"/>
    <property type="match status" value="2"/>
</dbReference>
<dbReference type="InterPro" id="IPR000008">
    <property type="entry name" value="C2_dom"/>
</dbReference>
<dbReference type="InterPro" id="IPR035892">
    <property type="entry name" value="C2_domain_sf"/>
</dbReference>
<dbReference type="InterPro" id="IPR028692">
    <property type="entry name" value="Syt13_C2B"/>
</dbReference>
<dbReference type="PANTHER" id="PTHR10024">
    <property type="entry name" value="SYNAPTOTAGMIN"/>
    <property type="match status" value="1"/>
</dbReference>
<dbReference type="PANTHER" id="PTHR10024:SF250">
    <property type="entry name" value="SYNAPTOTAGMIN-13"/>
    <property type="match status" value="1"/>
</dbReference>
<dbReference type="Pfam" id="PF00168">
    <property type="entry name" value="C2"/>
    <property type="match status" value="2"/>
</dbReference>
<dbReference type="SMART" id="SM00239">
    <property type="entry name" value="C2"/>
    <property type="match status" value="1"/>
</dbReference>
<dbReference type="SUPFAM" id="SSF49562">
    <property type="entry name" value="C2 domain (Calcium/lipid-binding domain, CaLB)"/>
    <property type="match status" value="2"/>
</dbReference>
<dbReference type="PROSITE" id="PS50004">
    <property type="entry name" value="C2"/>
    <property type="match status" value="2"/>
</dbReference>
<evidence type="ECO:0000250" key="1"/>
<evidence type="ECO:0000255" key="2"/>
<evidence type="ECO:0000255" key="3">
    <source>
        <dbReference type="PROSITE-ProRule" id="PRU00041"/>
    </source>
</evidence>
<evidence type="ECO:0000269" key="4">
    <source>
    </source>
</evidence>
<evidence type="ECO:0000305" key="5"/>
<evidence type="ECO:0007829" key="6">
    <source>
        <dbReference type="PDB" id="1WFM"/>
    </source>
</evidence>
<accession>Q7L8C5</accession>
<accession>A8K4P4</accession>
<accession>D3DQP1</accession>
<accession>Q9BQS3</accession>
<accession>Q9H041</accession>
<accession>Q9P2C0</accession>
<sequence length="426" mass="46885">MVLSVPVIALGATLGTATSILALCGVTCLCRHMHPKKGLLPRDQDPDLEKAKPSLLGSAQQFNVKKSTEPVQPRALLKFPDIYGPRPAVTAPEVINYADYSLRSTEEPTAPASPQPPNDSRLKRQVTEELFILPQNGVVEDVCVMETWNPEKAASWNQAPKLHYCLDYDCQKAELFVTRLEAVTSNHDGGCDCYVQGSVANRTGSVEAQTALKKRQLHTTWEEGLVLPLAEEELPTATLTLTLRTCDRFSRHSVAGELRLGLDGTSVPLGAAQWGELKTSAKEPSAGAGEVLLSISYLPAANRLLVVLIKAKNLHSNQSKELLGKDVSVKVTLKHQARKLKKKQTKRAKHKINPVWNEMIMFELPDDLLQASSVELEVLGQDDSGQSCALGHCSLGLHTSGSERSHWEEMLKNPRRQIAMWHQLHL</sequence>
<organism>
    <name type="scientific">Homo sapiens</name>
    <name type="common">Human</name>
    <dbReference type="NCBI Taxonomy" id="9606"/>
    <lineage>
        <taxon>Eukaryota</taxon>
        <taxon>Metazoa</taxon>
        <taxon>Chordata</taxon>
        <taxon>Craniata</taxon>
        <taxon>Vertebrata</taxon>
        <taxon>Euteleostomi</taxon>
        <taxon>Mammalia</taxon>
        <taxon>Eutheria</taxon>
        <taxon>Euarchontoglires</taxon>
        <taxon>Primates</taxon>
        <taxon>Haplorrhini</taxon>
        <taxon>Catarrhini</taxon>
        <taxon>Hominidae</taxon>
        <taxon>Homo</taxon>
    </lineage>
</organism>
<proteinExistence type="evidence at protein level"/>
<protein>
    <recommendedName>
        <fullName>Synaptotagmin-13</fullName>
    </recommendedName>
    <alternativeName>
        <fullName>Synaptotagmin XIII</fullName>
        <shortName>SytXIII</shortName>
    </alternativeName>
</protein>
<feature type="chain" id="PRO_0000183975" description="Synaptotagmin-13">
    <location>
        <begin position="1"/>
        <end position="426"/>
    </location>
</feature>
<feature type="topological domain" description="Vesicular" evidence="2">
    <location>
        <begin position="1"/>
        <end position="6"/>
    </location>
</feature>
<feature type="transmembrane region" description="Helical" evidence="2">
    <location>
        <begin position="7"/>
        <end position="29"/>
    </location>
</feature>
<feature type="topological domain" description="Cytoplasmic" evidence="2">
    <location>
        <begin position="30"/>
        <end position="426"/>
    </location>
</feature>
<feature type="domain" description="C2 1" evidence="3">
    <location>
        <begin position="158"/>
        <end position="275"/>
    </location>
</feature>
<feature type="domain" description="C2 2" evidence="3">
    <location>
        <begin position="287"/>
        <end position="422"/>
    </location>
</feature>
<feature type="strand" evidence="6">
    <location>
        <begin position="161"/>
        <end position="168"/>
    </location>
</feature>
<feature type="turn" evidence="6">
    <location>
        <begin position="170"/>
        <end position="172"/>
    </location>
</feature>
<feature type="strand" evidence="6">
    <location>
        <begin position="174"/>
        <end position="183"/>
    </location>
</feature>
<feature type="strand" evidence="6">
    <location>
        <begin position="193"/>
        <end position="201"/>
    </location>
</feature>
<feature type="strand" evidence="6">
    <location>
        <begin position="204"/>
        <end position="209"/>
    </location>
</feature>
<feature type="strand" evidence="6">
    <location>
        <begin position="217"/>
        <end position="220"/>
    </location>
</feature>
<feature type="strand" evidence="6">
    <location>
        <begin position="225"/>
        <end position="228"/>
    </location>
</feature>
<feature type="strand" evidence="6">
    <location>
        <begin position="238"/>
        <end position="245"/>
    </location>
</feature>
<feature type="strand" evidence="6">
    <location>
        <begin position="255"/>
        <end position="267"/>
    </location>
</feature>
<feature type="strand" evidence="6">
    <location>
        <begin position="273"/>
        <end position="276"/>
    </location>
</feature>
<comment type="function">
    <text evidence="1">May be involved in transport vesicle docking to the plasma membrane.</text>
</comment>
<comment type="subunit">
    <text evidence="1">Interacts with NRXN1.</text>
</comment>
<comment type="subcellular location">
    <subcellularLocation>
        <location evidence="1">Membrane</location>
        <topology evidence="1">Single-pass membrane protein</topology>
    </subcellularLocation>
</comment>
<comment type="tissue specificity">
    <text evidence="4">Expressed in brain, pancreas and kidney.</text>
</comment>
<comment type="domain">
    <text evidence="1">The first C2 domain/C2A does not mediate Ca(2+)-dependent phospholipid binding.</text>
</comment>
<comment type="domain">
    <text evidence="1">The second C2 domain/C2B domain binds phospholipids regardless of whether calcium is present.</text>
</comment>
<comment type="similarity">
    <text evidence="5">Belongs to the synaptotagmin family.</text>
</comment>
<comment type="sequence caution" evidence="5">
    <conflict type="erroneous initiation">
        <sequence resource="EMBL-CDS" id="BAA92665"/>
    </conflict>
</comment>
<reference key="1">
    <citation type="journal article" date="2000" name="DNA Res.">
        <title>Prediction of the coding sequences of unidentified human genes. XVI. The complete sequences of 150 new cDNA clones from brain which code for large proteins in vitro.</title>
        <authorList>
            <person name="Nagase T."/>
            <person name="Kikuno R."/>
            <person name="Ishikawa K."/>
            <person name="Hirosawa M."/>
            <person name="Ohara O."/>
        </authorList>
    </citation>
    <scope>NUCLEOTIDE SEQUENCE [LARGE SCALE MRNA]</scope>
    <source>
        <tissue>Brain</tissue>
    </source>
</reference>
<reference key="2">
    <citation type="journal article" date="2004" name="Nat. Genet.">
        <title>Complete sequencing and characterization of 21,243 full-length human cDNAs.</title>
        <authorList>
            <person name="Ota T."/>
            <person name="Suzuki Y."/>
            <person name="Nishikawa T."/>
            <person name="Otsuki T."/>
            <person name="Sugiyama T."/>
            <person name="Irie R."/>
            <person name="Wakamatsu A."/>
            <person name="Hayashi K."/>
            <person name="Sato H."/>
            <person name="Nagai K."/>
            <person name="Kimura K."/>
            <person name="Makita H."/>
            <person name="Sekine M."/>
            <person name="Obayashi M."/>
            <person name="Nishi T."/>
            <person name="Shibahara T."/>
            <person name="Tanaka T."/>
            <person name="Ishii S."/>
            <person name="Yamamoto J."/>
            <person name="Saito K."/>
            <person name="Kawai Y."/>
            <person name="Isono Y."/>
            <person name="Nakamura Y."/>
            <person name="Nagahari K."/>
            <person name="Murakami K."/>
            <person name="Yasuda T."/>
            <person name="Iwayanagi T."/>
            <person name="Wagatsuma M."/>
            <person name="Shiratori A."/>
            <person name="Sudo H."/>
            <person name="Hosoiri T."/>
            <person name="Kaku Y."/>
            <person name="Kodaira H."/>
            <person name="Kondo H."/>
            <person name="Sugawara M."/>
            <person name="Takahashi M."/>
            <person name="Kanda K."/>
            <person name="Yokoi T."/>
            <person name="Furuya T."/>
            <person name="Kikkawa E."/>
            <person name="Omura Y."/>
            <person name="Abe K."/>
            <person name="Kamihara K."/>
            <person name="Katsuta N."/>
            <person name="Sato K."/>
            <person name="Tanikawa M."/>
            <person name="Yamazaki M."/>
            <person name="Ninomiya K."/>
            <person name="Ishibashi T."/>
            <person name="Yamashita H."/>
            <person name="Murakawa K."/>
            <person name="Fujimori K."/>
            <person name="Tanai H."/>
            <person name="Kimata M."/>
            <person name="Watanabe M."/>
            <person name="Hiraoka S."/>
            <person name="Chiba Y."/>
            <person name="Ishida S."/>
            <person name="Ono Y."/>
            <person name="Takiguchi S."/>
            <person name="Watanabe S."/>
            <person name="Yosida M."/>
            <person name="Hotuta T."/>
            <person name="Kusano J."/>
            <person name="Kanehori K."/>
            <person name="Takahashi-Fujii A."/>
            <person name="Hara H."/>
            <person name="Tanase T.-O."/>
            <person name="Nomura Y."/>
            <person name="Togiya S."/>
            <person name="Komai F."/>
            <person name="Hara R."/>
            <person name="Takeuchi K."/>
            <person name="Arita M."/>
            <person name="Imose N."/>
            <person name="Musashino K."/>
            <person name="Yuuki H."/>
            <person name="Oshima A."/>
            <person name="Sasaki N."/>
            <person name="Aotsuka S."/>
            <person name="Yoshikawa Y."/>
            <person name="Matsunawa H."/>
            <person name="Ichihara T."/>
            <person name="Shiohata N."/>
            <person name="Sano S."/>
            <person name="Moriya S."/>
            <person name="Momiyama H."/>
            <person name="Satoh N."/>
            <person name="Takami S."/>
            <person name="Terashima Y."/>
            <person name="Suzuki O."/>
            <person name="Nakagawa S."/>
            <person name="Senoh A."/>
            <person name="Mizoguchi H."/>
            <person name="Goto Y."/>
            <person name="Shimizu F."/>
            <person name="Wakebe H."/>
            <person name="Hishigaki H."/>
            <person name="Watanabe T."/>
            <person name="Sugiyama A."/>
            <person name="Takemoto M."/>
            <person name="Kawakami B."/>
            <person name="Yamazaki M."/>
            <person name="Watanabe K."/>
            <person name="Kumagai A."/>
            <person name="Itakura S."/>
            <person name="Fukuzumi Y."/>
            <person name="Fujimori Y."/>
            <person name="Komiyama M."/>
            <person name="Tashiro H."/>
            <person name="Tanigami A."/>
            <person name="Fujiwara T."/>
            <person name="Ono T."/>
            <person name="Yamada K."/>
            <person name="Fujii Y."/>
            <person name="Ozaki K."/>
            <person name="Hirao M."/>
            <person name="Ohmori Y."/>
            <person name="Kawabata A."/>
            <person name="Hikiji T."/>
            <person name="Kobatake N."/>
            <person name="Inagaki H."/>
            <person name="Ikema Y."/>
            <person name="Okamoto S."/>
            <person name="Okitani R."/>
            <person name="Kawakami T."/>
            <person name="Noguchi S."/>
            <person name="Itoh T."/>
            <person name="Shigeta K."/>
            <person name="Senba T."/>
            <person name="Matsumura K."/>
            <person name="Nakajima Y."/>
            <person name="Mizuno T."/>
            <person name="Morinaga M."/>
            <person name="Sasaki M."/>
            <person name="Togashi T."/>
            <person name="Oyama M."/>
            <person name="Hata H."/>
            <person name="Watanabe M."/>
            <person name="Komatsu T."/>
            <person name="Mizushima-Sugano J."/>
            <person name="Satoh T."/>
            <person name="Shirai Y."/>
            <person name="Takahashi Y."/>
            <person name="Nakagawa K."/>
            <person name="Okumura K."/>
            <person name="Nagase T."/>
            <person name="Nomura N."/>
            <person name="Kikuchi H."/>
            <person name="Masuho Y."/>
            <person name="Yamashita R."/>
            <person name="Nakai K."/>
            <person name="Yada T."/>
            <person name="Nakamura Y."/>
            <person name="Ohara O."/>
            <person name="Isogai T."/>
            <person name="Sugano S."/>
        </authorList>
    </citation>
    <scope>NUCLEOTIDE SEQUENCE [LARGE SCALE MRNA]</scope>
</reference>
<reference key="3">
    <citation type="journal article" date="2007" name="BMC Genomics">
        <title>The full-ORF clone resource of the German cDNA consortium.</title>
        <authorList>
            <person name="Bechtel S."/>
            <person name="Rosenfelder H."/>
            <person name="Duda A."/>
            <person name="Schmidt C.P."/>
            <person name="Ernst U."/>
            <person name="Wellenreuther R."/>
            <person name="Mehrle A."/>
            <person name="Schuster C."/>
            <person name="Bahr A."/>
            <person name="Bloecker H."/>
            <person name="Heubner D."/>
            <person name="Hoerlein A."/>
            <person name="Michel G."/>
            <person name="Wedler H."/>
            <person name="Koehrer K."/>
            <person name="Ottenwaelder B."/>
            <person name="Poustka A."/>
            <person name="Wiemann S."/>
            <person name="Schupp I."/>
        </authorList>
    </citation>
    <scope>NUCLEOTIDE SEQUENCE [LARGE SCALE MRNA]</scope>
    <source>
        <tissue>Fetal brain</tissue>
    </source>
</reference>
<reference key="4">
    <citation type="submission" date="2005-09" db="EMBL/GenBank/DDBJ databases">
        <authorList>
            <person name="Mural R.J."/>
            <person name="Istrail S."/>
            <person name="Sutton G.G."/>
            <person name="Florea L."/>
            <person name="Halpern A.L."/>
            <person name="Mobarry C.M."/>
            <person name="Lippert R."/>
            <person name="Walenz B."/>
            <person name="Shatkay H."/>
            <person name="Dew I."/>
            <person name="Miller J.R."/>
            <person name="Flanigan M.J."/>
            <person name="Edwards N.J."/>
            <person name="Bolanos R."/>
            <person name="Fasulo D."/>
            <person name="Halldorsson B.V."/>
            <person name="Hannenhalli S."/>
            <person name="Turner R."/>
            <person name="Yooseph S."/>
            <person name="Lu F."/>
            <person name="Nusskern D.R."/>
            <person name="Shue B.C."/>
            <person name="Zheng X.H."/>
            <person name="Zhong F."/>
            <person name="Delcher A.L."/>
            <person name="Huson D.H."/>
            <person name="Kravitz S.A."/>
            <person name="Mouchard L."/>
            <person name="Reinert K."/>
            <person name="Remington K.A."/>
            <person name="Clark A.G."/>
            <person name="Waterman M.S."/>
            <person name="Eichler E.E."/>
            <person name="Adams M.D."/>
            <person name="Hunkapiller M.W."/>
            <person name="Myers E.W."/>
            <person name="Venter J.C."/>
        </authorList>
    </citation>
    <scope>NUCLEOTIDE SEQUENCE [LARGE SCALE GENOMIC DNA]</scope>
</reference>
<reference key="5">
    <citation type="journal article" date="2004" name="Genome Res.">
        <title>The status, quality, and expansion of the NIH full-length cDNA project: the Mammalian Gene Collection (MGC).</title>
        <authorList>
            <consortium name="The MGC Project Team"/>
        </authorList>
    </citation>
    <scope>NUCLEOTIDE SEQUENCE [LARGE SCALE MRNA]</scope>
    <source>
        <tissue>Brain</tissue>
    </source>
</reference>
<reference key="6">
    <citation type="journal article" date="2001" name="Genomics">
        <title>Genomic analysis of synaptotagmin genes.</title>
        <authorList>
            <person name="Craxton M.A."/>
        </authorList>
    </citation>
    <scope>NUCLEOTIDE SEQUENCE [MRNA] OF 150-322</scope>
    <scope>TISSUE SPECIFICITY</scope>
    <source>
        <tissue>Brain</tissue>
    </source>
</reference>
<reference key="7">
    <citation type="submission" date="2004-11" db="PDB data bank">
        <title>The first C2 domain of human synaptotagmin XIII.</title>
        <authorList>
            <consortium name="RIKEN structural genomics initiative (RSGI)"/>
        </authorList>
    </citation>
    <scope>STRUCTURE BY NMR OF 155-280</scope>
</reference>